<dbReference type="EMBL" id="CP000512">
    <property type="protein sequence ID" value="ABM30940.1"/>
    <property type="molecule type" value="Genomic_DNA"/>
</dbReference>
<dbReference type="RefSeq" id="WP_011793518.1">
    <property type="nucleotide sequence ID" value="NC_008752.1"/>
</dbReference>
<dbReference type="SMR" id="A1TJ02"/>
<dbReference type="STRING" id="397945.Aave_0333"/>
<dbReference type="GeneID" id="34237050"/>
<dbReference type="GeneID" id="79790138"/>
<dbReference type="KEGG" id="aav:Aave_0333"/>
<dbReference type="eggNOG" id="COG0048">
    <property type="taxonomic scope" value="Bacteria"/>
</dbReference>
<dbReference type="HOGENOM" id="CLU_104295_1_2_4"/>
<dbReference type="OrthoDB" id="9802366at2"/>
<dbReference type="Proteomes" id="UP000002596">
    <property type="component" value="Chromosome"/>
</dbReference>
<dbReference type="GO" id="GO:0015935">
    <property type="term" value="C:small ribosomal subunit"/>
    <property type="evidence" value="ECO:0007669"/>
    <property type="project" value="InterPro"/>
</dbReference>
<dbReference type="GO" id="GO:0019843">
    <property type="term" value="F:rRNA binding"/>
    <property type="evidence" value="ECO:0007669"/>
    <property type="project" value="UniProtKB-UniRule"/>
</dbReference>
<dbReference type="GO" id="GO:0003735">
    <property type="term" value="F:structural constituent of ribosome"/>
    <property type="evidence" value="ECO:0007669"/>
    <property type="project" value="InterPro"/>
</dbReference>
<dbReference type="GO" id="GO:0000049">
    <property type="term" value="F:tRNA binding"/>
    <property type="evidence" value="ECO:0007669"/>
    <property type="project" value="UniProtKB-UniRule"/>
</dbReference>
<dbReference type="GO" id="GO:0006412">
    <property type="term" value="P:translation"/>
    <property type="evidence" value="ECO:0007669"/>
    <property type="project" value="UniProtKB-UniRule"/>
</dbReference>
<dbReference type="CDD" id="cd03368">
    <property type="entry name" value="Ribosomal_S12"/>
    <property type="match status" value="1"/>
</dbReference>
<dbReference type="FunFam" id="2.40.50.140:FF:000001">
    <property type="entry name" value="30S ribosomal protein S12"/>
    <property type="match status" value="1"/>
</dbReference>
<dbReference type="Gene3D" id="2.40.50.140">
    <property type="entry name" value="Nucleic acid-binding proteins"/>
    <property type="match status" value="1"/>
</dbReference>
<dbReference type="HAMAP" id="MF_00403_B">
    <property type="entry name" value="Ribosomal_uS12_B"/>
    <property type="match status" value="1"/>
</dbReference>
<dbReference type="InterPro" id="IPR012340">
    <property type="entry name" value="NA-bd_OB-fold"/>
</dbReference>
<dbReference type="InterPro" id="IPR006032">
    <property type="entry name" value="Ribosomal_uS12"/>
</dbReference>
<dbReference type="InterPro" id="IPR005679">
    <property type="entry name" value="Ribosomal_uS12_bac"/>
</dbReference>
<dbReference type="NCBIfam" id="TIGR00981">
    <property type="entry name" value="rpsL_bact"/>
    <property type="match status" value="1"/>
</dbReference>
<dbReference type="PANTHER" id="PTHR11652">
    <property type="entry name" value="30S RIBOSOMAL PROTEIN S12 FAMILY MEMBER"/>
    <property type="match status" value="1"/>
</dbReference>
<dbReference type="Pfam" id="PF00164">
    <property type="entry name" value="Ribosom_S12_S23"/>
    <property type="match status" value="1"/>
</dbReference>
<dbReference type="PIRSF" id="PIRSF002133">
    <property type="entry name" value="Ribosomal_S12/S23"/>
    <property type="match status" value="1"/>
</dbReference>
<dbReference type="PRINTS" id="PR01034">
    <property type="entry name" value="RIBOSOMALS12"/>
</dbReference>
<dbReference type="SUPFAM" id="SSF50249">
    <property type="entry name" value="Nucleic acid-binding proteins"/>
    <property type="match status" value="1"/>
</dbReference>
<dbReference type="PROSITE" id="PS00055">
    <property type="entry name" value="RIBOSOMAL_S12"/>
    <property type="match status" value="1"/>
</dbReference>
<feature type="chain" id="PRO_0000295943" description="Small ribosomal subunit protein uS12">
    <location>
        <begin position="1"/>
        <end position="125"/>
    </location>
</feature>
<feature type="region of interest" description="Disordered" evidence="3">
    <location>
        <begin position="1"/>
        <end position="31"/>
    </location>
</feature>
<feature type="compositionally biased region" description="Polar residues" evidence="3">
    <location>
        <begin position="19"/>
        <end position="29"/>
    </location>
</feature>
<feature type="modified residue" description="3-methylthioaspartic acid" evidence="1">
    <location>
        <position position="89"/>
    </location>
</feature>
<name>RS12_PARC0</name>
<keyword id="KW-0488">Methylation</keyword>
<keyword id="KW-0687">Ribonucleoprotein</keyword>
<keyword id="KW-0689">Ribosomal protein</keyword>
<keyword id="KW-0694">RNA-binding</keyword>
<keyword id="KW-0699">rRNA-binding</keyword>
<keyword id="KW-0820">tRNA-binding</keyword>
<organism>
    <name type="scientific">Paracidovorax citrulli (strain AAC00-1)</name>
    <name type="common">Acidovorax citrulli</name>
    <dbReference type="NCBI Taxonomy" id="397945"/>
    <lineage>
        <taxon>Bacteria</taxon>
        <taxon>Pseudomonadati</taxon>
        <taxon>Pseudomonadota</taxon>
        <taxon>Betaproteobacteria</taxon>
        <taxon>Burkholderiales</taxon>
        <taxon>Comamonadaceae</taxon>
        <taxon>Paracidovorax</taxon>
    </lineage>
</organism>
<protein>
    <recommendedName>
        <fullName evidence="2">Small ribosomal subunit protein uS12</fullName>
    </recommendedName>
    <alternativeName>
        <fullName evidence="4">30S ribosomal protein S12</fullName>
    </alternativeName>
</protein>
<gene>
    <name evidence="2" type="primary">rpsL</name>
    <name type="ordered locus">Aave_0333</name>
</gene>
<proteinExistence type="inferred from homology"/>
<comment type="function">
    <text evidence="2">With S4 and S5 plays an important role in translational accuracy.</text>
</comment>
<comment type="function">
    <text evidence="2">Interacts with and stabilizes bases of the 16S rRNA that are involved in tRNA selection in the A site and with the mRNA backbone. Located at the interface of the 30S and 50S subunits, it traverses the body of the 30S subunit contacting proteins on the other side and probably holding the rRNA structure together. The combined cluster of proteins S8, S12 and S17 appears to hold together the shoulder and platform of the 30S subunit.</text>
</comment>
<comment type="subunit">
    <text evidence="2">Part of the 30S ribosomal subunit. Contacts proteins S8 and S17. May interact with IF1 in the 30S initiation complex.</text>
</comment>
<comment type="similarity">
    <text evidence="2">Belongs to the universal ribosomal protein uS12 family.</text>
</comment>
<evidence type="ECO:0000250" key="1"/>
<evidence type="ECO:0000255" key="2">
    <source>
        <dbReference type="HAMAP-Rule" id="MF_00403"/>
    </source>
</evidence>
<evidence type="ECO:0000256" key="3">
    <source>
        <dbReference type="SAM" id="MobiDB-lite"/>
    </source>
</evidence>
<evidence type="ECO:0000305" key="4"/>
<reference key="1">
    <citation type="submission" date="2006-12" db="EMBL/GenBank/DDBJ databases">
        <title>Complete sequence of Acidovorax avenae subsp. citrulli AAC00-1.</title>
        <authorList>
            <person name="Copeland A."/>
            <person name="Lucas S."/>
            <person name="Lapidus A."/>
            <person name="Barry K."/>
            <person name="Detter J.C."/>
            <person name="Glavina del Rio T."/>
            <person name="Dalin E."/>
            <person name="Tice H."/>
            <person name="Pitluck S."/>
            <person name="Kiss H."/>
            <person name="Brettin T."/>
            <person name="Bruce D."/>
            <person name="Han C."/>
            <person name="Tapia R."/>
            <person name="Gilna P."/>
            <person name="Schmutz J."/>
            <person name="Larimer F."/>
            <person name="Land M."/>
            <person name="Hauser L."/>
            <person name="Kyrpides N."/>
            <person name="Kim E."/>
            <person name="Stahl D."/>
            <person name="Richardson P."/>
        </authorList>
    </citation>
    <scope>NUCLEOTIDE SEQUENCE [LARGE SCALE GENOMIC DNA]</scope>
    <source>
        <strain>AAC00-1</strain>
    </source>
</reference>
<sequence length="125" mass="13920">MPTINQLVRQGREVETTKSKSPAMQNSPQRRGVCTRVYTTTPKKPNSALRKVAKVRLTNGFEVISYIGGEGHNLQEHSVVLVRGGRVKDLPGVRYHIVRGSLDLQGVKDRKQARSKYGAKKPKAK</sequence>
<accession>A1TJ02</accession>